<gene>
    <name evidence="8" type="primary">ceh-51</name>
    <name evidence="8" type="ORF">Y80D3A.3</name>
</gene>
<keyword id="KW-0217">Developmental protein</keyword>
<keyword id="KW-0238">DNA-binding</keyword>
<keyword id="KW-0371">Homeobox</keyword>
<keyword id="KW-0539">Nucleus</keyword>
<keyword id="KW-1185">Reference proteome</keyword>
<sequence length="234" mass="26540">MSSSNYNINNGGDYYPLSSSNLNSTSAITNATVMEYSTMPSSSPGSMSSSPAYPAAYQAPSPCYVADPNQLYYQQQLAHNGNDMLVQAHAQAYQAQCFAWFQQQYSQLSPSSFPHPMVAHHAGFIPPPPSFLHHQHQQHPRAPSEKRRGARTPFSDSQLYALRTRFEQCDTIKVDERRKLGAVIGLSPEQIKIWFQNRRFKLRKEKYKQIKQDAVQQQKSAKEEAEEDQKHVIS</sequence>
<name>CEH51_CAEEL</name>
<organism evidence="7">
    <name type="scientific">Caenorhabditis elegans</name>
    <dbReference type="NCBI Taxonomy" id="6239"/>
    <lineage>
        <taxon>Eukaryota</taxon>
        <taxon>Metazoa</taxon>
        <taxon>Ecdysozoa</taxon>
        <taxon>Nematoda</taxon>
        <taxon>Chromadorea</taxon>
        <taxon>Rhabditida</taxon>
        <taxon>Rhabditina</taxon>
        <taxon>Rhabditomorpha</taxon>
        <taxon>Rhabditoidea</taxon>
        <taxon>Rhabditidae</taxon>
        <taxon>Peloderinae</taxon>
        <taxon>Caenorhabditis</taxon>
    </lineage>
</organism>
<dbReference type="EMBL" id="BX284605">
    <property type="protein sequence ID" value="CAB60440.1"/>
    <property type="molecule type" value="Genomic_DNA"/>
</dbReference>
<dbReference type="RefSeq" id="NP_507685.1">
    <property type="nucleotide sequence ID" value="NM_075284.6"/>
</dbReference>
<dbReference type="SMR" id="Q9U1R1"/>
<dbReference type="FunCoup" id="Q9U1R1">
    <property type="interactions" value="85"/>
</dbReference>
<dbReference type="IntAct" id="Q9U1R1">
    <property type="interactions" value="18"/>
</dbReference>
<dbReference type="STRING" id="6239.Y80D3A.3.1"/>
<dbReference type="PaxDb" id="6239-Y80D3A.3"/>
<dbReference type="EnsemblMetazoa" id="Y80D3A.3.1">
    <property type="protein sequence ID" value="Y80D3A.3.1"/>
    <property type="gene ID" value="WBGene00013583"/>
</dbReference>
<dbReference type="GeneID" id="180233"/>
<dbReference type="KEGG" id="cel:CELE_Y80D3A.3"/>
<dbReference type="UCSC" id="Y80D3A.3">
    <property type="organism name" value="c. elegans"/>
</dbReference>
<dbReference type="AGR" id="WB:WBGene00013583"/>
<dbReference type="CTD" id="180233"/>
<dbReference type="WormBase" id="Y80D3A.3">
    <property type="protein sequence ID" value="CE24675"/>
    <property type="gene ID" value="WBGene00013583"/>
    <property type="gene designation" value="ceh-51"/>
</dbReference>
<dbReference type="eggNOG" id="KOG0850">
    <property type="taxonomic scope" value="Eukaryota"/>
</dbReference>
<dbReference type="GeneTree" id="ENSGT00940000165097"/>
<dbReference type="HOGENOM" id="CLU_1185963_0_0_1"/>
<dbReference type="InParanoid" id="Q9U1R1"/>
<dbReference type="OMA" id="TMRIDSA"/>
<dbReference type="OrthoDB" id="6159439at2759"/>
<dbReference type="PhylomeDB" id="Q9U1R1"/>
<dbReference type="PRO" id="PR:Q9U1R1"/>
<dbReference type="Proteomes" id="UP000001940">
    <property type="component" value="Chromosome V"/>
</dbReference>
<dbReference type="Bgee" id="WBGene00013583">
    <property type="expression patterns" value="Expressed in embryo and 3 other cell types or tissues"/>
</dbReference>
<dbReference type="GO" id="GO:0005634">
    <property type="term" value="C:nucleus"/>
    <property type="evidence" value="ECO:0000314"/>
    <property type="project" value="WormBase"/>
</dbReference>
<dbReference type="GO" id="GO:0000981">
    <property type="term" value="F:DNA-binding transcription factor activity, RNA polymerase II-specific"/>
    <property type="evidence" value="ECO:0000318"/>
    <property type="project" value="GO_Central"/>
</dbReference>
<dbReference type="GO" id="GO:0000978">
    <property type="term" value="F:RNA polymerase II cis-regulatory region sequence-specific DNA binding"/>
    <property type="evidence" value="ECO:0000318"/>
    <property type="project" value="GO_Central"/>
</dbReference>
<dbReference type="GO" id="GO:0030154">
    <property type="term" value="P:cell differentiation"/>
    <property type="evidence" value="ECO:0000318"/>
    <property type="project" value="GO_Central"/>
</dbReference>
<dbReference type="GO" id="GO:0007501">
    <property type="term" value="P:mesodermal cell fate specification"/>
    <property type="evidence" value="ECO:0000315"/>
    <property type="project" value="WormBase"/>
</dbReference>
<dbReference type="GO" id="GO:0042694">
    <property type="term" value="P:muscle cell fate specification"/>
    <property type="evidence" value="ECO:0000315"/>
    <property type="project" value="WormBase"/>
</dbReference>
<dbReference type="GO" id="GO:0160096">
    <property type="term" value="P:nematode pharyngeal muscle development"/>
    <property type="evidence" value="ECO:0000315"/>
    <property type="project" value="WormBase"/>
</dbReference>
<dbReference type="GO" id="GO:0160094">
    <property type="term" value="P:nematode pharynx development"/>
    <property type="evidence" value="ECO:0000315"/>
    <property type="project" value="WormBase"/>
</dbReference>
<dbReference type="GO" id="GO:0006357">
    <property type="term" value="P:regulation of transcription by RNA polymerase II"/>
    <property type="evidence" value="ECO:0000318"/>
    <property type="project" value="GO_Central"/>
</dbReference>
<dbReference type="CDD" id="cd00086">
    <property type="entry name" value="homeodomain"/>
    <property type="match status" value="1"/>
</dbReference>
<dbReference type="Gene3D" id="1.10.10.60">
    <property type="entry name" value="Homeodomain-like"/>
    <property type="match status" value="1"/>
</dbReference>
<dbReference type="InterPro" id="IPR050460">
    <property type="entry name" value="Distal-less_Homeobox_TF"/>
</dbReference>
<dbReference type="InterPro" id="IPR001356">
    <property type="entry name" value="HD"/>
</dbReference>
<dbReference type="InterPro" id="IPR009057">
    <property type="entry name" value="Homeodomain-like_sf"/>
</dbReference>
<dbReference type="PANTHER" id="PTHR24327">
    <property type="entry name" value="HOMEOBOX PROTEIN"/>
    <property type="match status" value="1"/>
</dbReference>
<dbReference type="PANTHER" id="PTHR24327:SF84">
    <property type="entry name" value="HOMEOBOX PROTEIN CEH-51"/>
    <property type="match status" value="1"/>
</dbReference>
<dbReference type="Pfam" id="PF00046">
    <property type="entry name" value="Homeodomain"/>
    <property type="match status" value="1"/>
</dbReference>
<dbReference type="SMART" id="SM00389">
    <property type="entry name" value="HOX"/>
    <property type="match status" value="1"/>
</dbReference>
<dbReference type="SUPFAM" id="SSF46689">
    <property type="entry name" value="Homeodomain-like"/>
    <property type="match status" value="1"/>
</dbReference>
<dbReference type="PROSITE" id="PS50071">
    <property type="entry name" value="HOMEOBOX_2"/>
    <property type="match status" value="1"/>
</dbReference>
<reference evidence="7" key="1">
    <citation type="journal article" date="1998" name="Science">
        <title>Genome sequence of the nematode C. elegans: a platform for investigating biology.</title>
        <authorList>
            <consortium name="The C. elegans sequencing consortium"/>
        </authorList>
    </citation>
    <scope>NUCLEOTIDE SEQUENCE [LARGE SCALE GENOMIC DNA]</scope>
    <source>
        <strain evidence="7">Bristol N2</strain>
    </source>
</reference>
<reference evidence="6" key="2">
    <citation type="journal article" date="2009" name="Development">
        <title>The NK-2 class homeodomain factor CEH-51 and the T-box factor TBX-35 have overlapping function in C. elegans mesoderm development.</title>
        <authorList>
            <person name="Broitman-Maduro G."/>
            <person name="Owraghi M."/>
            <person name="Hung W.W."/>
            <person name="Kuntz S."/>
            <person name="Sternberg P.W."/>
            <person name="Maduro M.F."/>
        </authorList>
    </citation>
    <scope>FUNCTION</scope>
    <scope>SUBCELLULAR LOCATION</scope>
    <scope>DEVELOPMENTAL STAGE</scope>
    <scope>DISRUPTION PHENOTYPE</scope>
</reference>
<proteinExistence type="evidence at transcript level"/>
<evidence type="ECO:0000255" key="1">
    <source>
        <dbReference type="PROSITE-ProRule" id="PRU00108"/>
    </source>
</evidence>
<evidence type="ECO:0000255" key="2">
    <source>
        <dbReference type="RuleBase" id="RU000682"/>
    </source>
</evidence>
<evidence type="ECO:0000256" key="3">
    <source>
        <dbReference type="SAM" id="MobiDB-lite"/>
    </source>
</evidence>
<evidence type="ECO:0000269" key="4">
    <source>
    </source>
</evidence>
<evidence type="ECO:0000303" key="5">
    <source>
    </source>
</evidence>
<evidence type="ECO:0000305" key="6"/>
<evidence type="ECO:0000312" key="7">
    <source>
        <dbReference type="Proteomes" id="UP000001940"/>
    </source>
</evidence>
<evidence type="ECO:0000312" key="8">
    <source>
        <dbReference type="WormBase" id="Y80D3A.3"/>
    </source>
</evidence>
<accession>Q9U1R1</accession>
<protein>
    <recommendedName>
        <fullName evidence="5">Homeobox protein ceh-51</fullName>
    </recommendedName>
</protein>
<feature type="chain" id="PRO_0000453377" description="Homeobox protein ceh-51">
    <location>
        <begin position="1"/>
        <end position="234"/>
    </location>
</feature>
<feature type="DNA-binding region" description="Homeobox" evidence="1">
    <location>
        <begin position="147"/>
        <end position="206"/>
    </location>
</feature>
<feature type="region of interest" description="Disordered" evidence="3">
    <location>
        <begin position="128"/>
        <end position="154"/>
    </location>
</feature>
<feature type="region of interest" description="Disordered" evidence="3">
    <location>
        <begin position="209"/>
        <end position="234"/>
    </location>
</feature>
<feature type="compositionally biased region" description="Basic and acidic residues" evidence="3">
    <location>
        <begin position="220"/>
        <end position="234"/>
    </location>
</feature>
<comment type="function">
    <text evidence="4">Required for mesoderm development, including specification of muscle and coelomocyte precursors.</text>
</comment>
<comment type="subcellular location">
    <subcellularLocation>
        <location evidence="2 4">Nucleus</location>
    </subcellularLocation>
    <text evidence="4">Nuclear localization most obvious in the 8 embryonic cells derived from the MS blastomere.</text>
</comment>
<comment type="developmental stage">
    <text evidence="4">Expressed in the early embryo, in the mesodermal lineage derived from the MS blastomere.</text>
</comment>
<comment type="disruption phenotype">
    <text evidence="4">RNAi-mediated knockdown on an hlh-1 mutant background causes embryos to become paralyzed and arrested at the 2-fold stage.</text>
</comment>
<comment type="similarity">
    <text evidence="6">Belongs to the NK-2 homeobox family.</text>
</comment>